<accession>B2TY45</accession>
<feature type="chain" id="PRO_1000096688" description="DNA mismatch repair protein MutL">
    <location>
        <begin position="1"/>
        <end position="615"/>
    </location>
</feature>
<feature type="region of interest" description="Disordered" evidence="2">
    <location>
        <begin position="363"/>
        <end position="397"/>
    </location>
</feature>
<feature type="compositionally biased region" description="Low complexity" evidence="2">
    <location>
        <begin position="364"/>
        <end position="391"/>
    </location>
</feature>
<reference key="1">
    <citation type="submission" date="2008-05" db="EMBL/GenBank/DDBJ databases">
        <title>Complete sequence of Shigella boydii serotype 18 strain BS512.</title>
        <authorList>
            <person name="Rasko D.A."/>
            <person name="Rosovitz M."/>
            <person name="Maurelli A.T."/>
            <person name="Myers G."/>
            <person name="Seshadri R."/>
            <person name="Cer R."/>
            <person name="Jiang L."/>
            <person name="Ravel J."/>
            <person name="Sebastian Y."/>
        </authorList>
    </citation>
    <scope>NUCLEOTIDE SEQUENCE [LARGE SCALE GENOMIC DNA]</scope>
    <source>
        <strain>CDC 3083-94 / BS512</strain>
    </source>
</reference>
<gene>
    <name evidence="1" type="primary">mutL</name>
    <name type="ordered locus">SbBS512_E4701</name>
</gene>
<organism>
    <name type="scientific">Shigella boydii serotype 18 (strain CDC 3083-94 / BS512)</name>
    <dbReference type="NCBI Taxonomy" id="344609"/>
    <lineage>
        <taxon>Bacteria</taxon>
        <taxon>Pseudomonadati</taxon>
        <taxon>Pseudomonadota</taxon>
        <taxon>Gammaproteobacteria</taxon>
        <taxon>Enterobacterales</taxon>
        <taxon>Enterobacteriaceae</taxon>
        <taxon>Shigella</taxon>
    </lineage>
</organism>
<sequence>MPIQVLPPQLANQIAAGEVVERPASVVKELVENSLDAGATRIDIDIERGGAKLIRIRDNGCGIKKDELALALARHATSKIASLDDLEAIISLGFRGEALASISSVSRLTLTSRTAEQQEAWQAYAEGRDMNVTVKPAAHPVGTTLEVLDLFYNTPARRKFLRTEKTEFNHIDEIIRRIALARFDVTINLSHNGKIVRQYRAVPEGGQKERRLGAICGTAFLEQALAIEWQHGDLTLRGWVADPNHTTPALAEIQYCYVNGRMMRDRLINHAIRQACEDKLGADQQPAFVLYLEIDPHQVDVNVHPAKHEVRFHQSRLVHDFIYQGVLSVLQQQLETPLPLDDEPQPAPRSIPENRVAAGRNHFAEPAAREPVAPRYTPAPASGSRPAAPWPNAQPGYQKQQGEVYRQLLQTPAPMQKLKAPEPQEPALAANSQSFGRVLTIVHSDCALLERDGNISLLALPVAERWLRQVQLTPGEAPVCAQPLLIPLRLKVSGEEKSALEKAQSALAELGIDFQSDAQHVTIRAVPLPLRQQNLQILIPELIGYLAKQSVFEPGNIAQWIARNLMSEHAQWSMAQAITLLADVERLCPQLVKTPPGGLLQSVDLHPAIKALKDE</sequence>
<proteinExistence type="inferred from homology"/>
<comment type="function">
    <text evidence="1">This protein is involved in the repair of mismatches in DNA. It is required for dam-dependent methyl-directed DNA mismatch repair. May act as a 'molecular matchmaker', a protein that promotes the formation of a stable complex between two or more DNA-binding proteins in an ATP-dependent manner without itself being part of a final effector complex.</text>
</comment>
<comment type="similarity">
    <text evidence="1">Belongs to the DNA mismatch repair MutL/HexB family.</text>
</comment>
<dbReference type="EMBL" id="CP001063">
    <property type="protein sequence ID" value="ACD09661.1"/>
    <property type="molecule type" value="Genomic_DNA"/>
</dbReference>
<dbReference type="RefSeq" id="WP_001122503.1">
    <property type="nucleotide sequence ID" value="NC_010658.1"/>
</dbReference>
<dbReference type="SMR" id="B2TY45"/>
<dbReference type="STRING" id="344609.SbBS512_E4701"/>
<dbReference type="GeneID" id="93777651"/>
<dbReference type="KEGG" id="sbc:SbBS512_E4701"/>
<dbReference type="HOGENOM" id="CLU_004131_5_1_6"/>
<dbReference type="Proteomes" id="UP000001030">
    <property type="component" value="Chromosome"/>
</dbReference>
<dbReference type="GO" id="GO:0032300">
    <property type="term" value="C:mismatch repair complex"/>
    <property type="evidence" value="ECO:0007669"/>
    <property type="project" value="InterPro"/>
</dbReference>
<dbReference type="GO" id="GO:0005524">
    <property type="term" value="F:ATP binding"/>
    <property type="evidence" value="ECO:0007669"/>
    <property type="project" value="InterPro"/>
</dbReference>
<dbReference type="GO" id="GO:0016887">
    <property type="term" value="F:ATP hydrolysis activity"/>
    <property type="evidence" value="ECO:0007669"/>
    <property type="project" value="InterPro"/>
</dbReference>
<dbReference type="GO" id="GO:0140664">
    <property type="term" value="F:ATP-dependent DNA damage sensor activity"/>
    <property type="evidence" value="ECO:0007669"/>
    <property type="project" value="InterPro"/>
</dbReference>
<dbReference type="GO" id="GO:0030983">
    <property type="term" value="F:mismatched DNA binding"/>
    <property type="evidence" value="ECO:0007669"/>
    <property type="project" value="InterPro"/>
</dbReference>
<dbReference type="GO" id="GO:0006298">
    <property type="term" value="P:mismatch repair"/>
    <property type="evidence" value="ECO:0007669"/>
    <property type="project" value="UniProtKB-UniRule"/>
</dbReference>
<dbReference type="CDD" id="cd16926">
    <property type="entry name" value="HATPase_MutL-MLH-PMS-like"/>
    <property type="match status" value="1"/>
</dbReference>
<dbReference type="CDD" id="cd03482">
    <property type="entry name" value="MutL_Trans_MutL"/>
    <property type="match status" value="1"/>
</dbReference>
<dbReference type="FunFam" id="3.30.230.10:FF:000013">
    <property type="entry name" value="DNA mismatch repair endonuclease MutL"/>
    <property type="match status" value="1"/>
</dbReference>
<dbReference type="FunFam" id="3.30.565.10:FF:000003">
    <property type="entry name" value="DNA mismatch repair endonuclease MutL"/>
    <property type="match status" value="1"/>
</dbReference>
<dbReference type="FunFam" id="3.30.1370.100:FF:000002">
    <property type="entry name" value="DNA mismatch repair protein MutL"/>
    <property type="match status" value="1"/>
</dbReference>
<dbReference type="Gene3D" id="3.30.230.10">
    <property type="match status" value="1"/>
</dbReference>
<dbReference type="Gene3D" id="3.30.565.10">
    <property type="entry name" value="Histidine kinase-like ATPase, C-terminal domain"/>
    <property type="match status" value="1"/>
</dbReference>
<dbReference type="Gene3D" id="3.30.1540.20">
    <property type="entry name" value="MutL, C-terminal domain, dimerisation subdomain"/>
    <property type="match status" value="1"/>
</dbReference>
<dbReference type="Gene3D" id="3.30.1370.100">
    <property type="entry name" value="MutL, C-terminal domain, regulatory subdomain"/>
    <property type="match status" value="1"/>
</dbReference>
<dbReference type="HAMAP" id="MF_00149">
    <property type="entry name" value="DNA_mis_repair"/>
    <property type="match status" value="1"/>
</dbReference>
<dbReference type="InterPro" id="IPR014762">
    <property type="entry name" value="DNA_mismatch_repair_CS"/>
</dbReference>
<dbReference type="InterPro" id="IPR020667">
    <property type="entry name" value="DNA_mismatch_repair_MutL"/>
</dbReference>
<dbReference type="InterPro" id="IPR013507">
    <property type="entry name" value="DNA_mismatch_S5_2-like"/>
</dbReference>
<dbReference type="InterPro" id="IPR036890">
    <property type="entry name" value="HATPase_C_sf"/>
</dbReference>
<dbReference type="InterPro" id="IPR002099">
    <property type="entry name" value="MutL/Mlh/PMS"/>
</dbReference>
<dbReference type="InterPro" id="IPR038973">
    <property type="entry name" value="MutL/Mlh/Pms-like"/>
</dbReference>
<dbReference type="InterPro" id="IPR014790">
    <property type="entry name" value="MutL_C"/>
</dbReference>
<dbReference type="InterPro" id="IPR042120">
    <property type="entry name" value="MutL_C_dimsub"/>
</dbReference>
<dbReference type="InterPro" id="IPR042121">
    <property type="entry name" value="MutL_C_regsub"/>
</dbReference>
<dbReference type="InterPro" id="IPR037198">
    <property type="entry name" value="MutL_C_sf"/>
</dbReference>
<dbReference type="InterPro" id="IPR020568">
    <property type="entry name" value="Ribosomal_Su5_D2-typ_SF"/>
</dbReference>
<dbReference type="InterPro" id="IPR014721">
    <property type="entry name" value="Ribsml_uS5_D2-typ_fold_subgr"/>
</dbReference>
<dbReference type="NCBIfam" id="TIGR00585">
    <property type="entry name" value="mutl"/>
    <property type="match status" value="1"/>
</dbReference>
<dbReference type="NCBIfam" id="NF000948">
    <property type="entry name" value="PRK00095.1-1"/>
    <property type="match status" value="1"/>
</dbReference>
<dbReference type="PANTHER" id="PTHR10073">
    <property type="entry name" value="DNA MISMATCH REPAIR PROTEIN MLH, PMS, MUTL"/>
    <property type="match status" value="1"/>
</dbReference>
<dbReference type="PANTHER" id="PTHR10073:SF12">
    <property type="entry name" value="DNA MISMATCH REPAIR PROTEIN MLH1"/>
    <property type="match status" value="1"/>
</dbReference>
<dbReference type="Pfam" id="PF01119">
    <property type="entry name" value="DNA_mis_repair"/>
    <property type="match status" value="1"/>
</dbReference>
<dbReference type="Pfam" id="PF13589">
    <property type="entry name" value="HATPase_c_3"/>
    <property type="match status" value="1"/>
</dbReference>
<dbReference type="Pfam" id="PF08676">
    <property type="entry name" value="MutL_C"/>
    <property type="match status" value="1"/>
</dbReference>
<dbReference type="SMART" id="SM01340">
    <property type="entry name" value="DNA_mis_repair"/>
    <property type="match status" value="1"/>
</dbReference>
<dbReference type="SMART" id="SM00853">
    <property type="entry name" value="MutL_C"/>
    <property type="match status" value="1"/>
</dbReference>
<dbReference type="SUPFAM" id="SSF55874">
    <property type="entry name" value="ATPase domain of HSP90 chaperone/DNA topoisomerase II/histidine kinase"/>
    <property type="match status" value="1"/>
</dbReference>
<dbReference type="SUPFAM" id="SSF118116">
    <property type="entry name" value="DNA mismatch repair protein MutL"/>
    <property type="match status" value="1"/>
</dbReference>
<dbReference type="SUPFAM" id="SSF54211">
    <property type="entry name" value="Ribosomal protein S5 domain 2-like"/>
    <property type="match status" value="1"/>
</dbReference>
<dbReference type="PROSITE" id="PS00058">
    <property type="entry name" value="DNA_MISMATCH_REPAIR_1"/>
    <property type="match status" value="1"/>
</dbReference>
<keyword id="KW-0227">DNA damage</keyword>
<keyword id="KW-0234">DNA repair</keyword>
<keyword id="KW-1185">Reference proteome</keyword>
<name>MUTL_SHIB3</name>
<evidence type="ECO:0000255" key="1">
    <source>
        <dbReference type="HAMAP-Rule" id="MF_00149"/>
    </source>
</evidence>
<evidence type="ECO:0000256" key="2">
    <source>
        <dbReference type="SAM" id="MobiDB-lite"/>
    </source>
</evidence>
<protein>
    <recommendedName>
        <fullName evidence="1">DNA mismatch repair protein MutL</fullName>
    </recommendedName>
</protein>